<sequence length="63" mass="7314">MKANELKEKSVEELNAELLRLLREQFDLRMKLNTDQLAQAHLVKQVRRDIARVKTVLNQKAGA</sequence>
<dbReference type="EMBL" id="CP000510">
    <property type="protein sequence ID" value="ABM05199.1"/>
    <property type="molecule type" value="Genomic_DNA"/>
</dbReference>
<dbReference type="RefSeq" id="WP_011771747.1">
    <property type="nucleotide sequence ID" value="NC_008709.1"/>
</dbReference>
<dbReference type="SMR" id="A1T0D4"/>
<dbReference type="STRING" id="357804.Ping_3516"/>
<dbReference type="KEGG" id="pin:Ping_3516"/>
<dbReference type="eggNOG" id="COG0255">
    <property type="taxonomic scope" value="Bacteria"/>
</dbReference>
<dbReference type="HOGENOM" id="CLU_158491_1_2_6"/>
<dbReference type="OrthoDB" id="9815192at2"/>
<dbReference type="Proteomes" id="UP000000639">
    <property type="component" value="Chromosome"/>
</dbReference>
<dbReference type="GO" id="GO:0022625">
    <property type="term" value="C:cytosolic large ribosomal subunit"/>
    <property type="evidence" value="ECO:0007669"/>
    <property type="project" value="TreeGrafter"/>
</dbReference>
<dbReference type="GO" id="GO:0003735">
    <property type="term" value="F:structural constituent of ribosome"/>
    <property type="evidence" value="ECO:0007669"/>
    <property type="project" value="InterPro"/>
</dbReference>
<dbReference type="GO" id="GO:0006412">
    <property type="term" value="P:translation"/>
    <property type="evidence" value="ECO:0007669"/>
    <property type="project" value="UniProtKB-UniRule"/>
</dbReference>
<dbReference type="CDD" id="cd00427">
    <property type="entry name" value="Ribosomal_L29_HIP"/>
    <property type="match status" value="1"/>
</dbReference>
<dbReference type="FunFam" id="1.10.287.310:FF:000001">
    <property type="entry name" value="50S ribosomal protein L29"/>
    <property type="match status" value="1"/>
</dbReference>
<dbReference type="Gene3D" id="1.10.287.310">
    <property type="match status" value="1"/>
</dbReference>
<dbReference type="HAMAP" id="MF_00374">
    <property type="entry name" value="Ribosomal_uL29"/>
    <property type="match status" value="1"/>
</dbReference>
<dbReference type="InterPro" id="IPR050063">
    <property type="entry name" value="Ribosomal_protein_uL29"/>
</dbReference>
<dbReference type="InterPro" id="IPR001854">
    <property type="entry name" value="Ribosomal_uL29"/>
</dbReference>
<dbReference type="InterPro" id="IPR036049">
    <property type="entry name" value="Ribosomal_uL29_sf"/>
</dbReference>
<dbReference type="NCBIfam" id="TIGR00012">
    <property type="entry name" value="L29"/>
    <property type="match status" value="1"/>
</dbReference>
<dbReference type="PANTHER" id="PTHR10916">
    <property type="entry name" value="60S RIBOSOMAL PROTEIN L35/50S RIBOSOMAL PROTEIN L29"/>
    <property type="match status" value="1"/>
</dbReference>
<dbReference type="PANTHER" id="PTHR10916:SF0">
    <property type="entry name" value="LARGE RIBOSOMAL SUBUNIT PROTEIN UL29C"/>
    <property type="match status" value="1"/>
</dbReference>
<dbReference type="Pfam" id="PF00831">
    <property type="entry name" value="Ribosomal_L29"/>
    <property type="match status" value="1"/>
</dbReference>
<dbReference type="SUPFAM" id="SSF46561">
    <property type="entry name" value="Ribosomal protein L29 (L29p)"/>
    <property type="match status" value="1"/>
</dbReference>
<keyword id="KW-1185">Reference proteome</keyword>
<keyword id="KW-0687">Ribonucleoprotein</keyword>
<keyword id="KW-0689">Ribosomal protein</keyword>
<evidence type="ECO:0000255" key="1">
    <source>
        <dbReference type="HAMAP-Rule" id="MF_00374"/>
    </source>
</evidence>
<evidence type="ECO:0000305" key="2"/>
<reference key="1">
    <citation type="journal article" date="2008" name="BMC Genomics">
        <title>Genomics of an extreme psychrophile, Psychromonas ingrahamii.</title>
        <authorList>
            <person name="Riley M."/>
            <person name="Staley J.T."/>
            <person name="Danchin A."/>
            <person name="Wang T.Z."/>
            <person name="Brettin T.S."/>
            <person name="Hauser L.J."/>
            <person name="Land M.L."/>
            <person name="Thompson L.S."/>
        </authorList>
    </citation>
    <scope>NUCLEOTIDE SEQUENCE [LARGE SCALE GENOMIC DNA]</scope>
    <source>
        <strain>DSM 17664 / CCUG 51855 / 37</strain>
    </source>
</reference>
<comment type="similarity">
    <text evidence="1">Belongs to the universal ribosomal protein uL29 family.</text>
</comment>
<proteinExistence type="inferred from homology"/>
<protein>
    <recommendedName>
        <fullName evidence="1">Large ribosomal subunit protein uL29</fullName>
    </recommendedName>
    <alternativeName>
        <fullName evidence="2">50S ribosomal protein L29</fullName>
    </alternativeName>
</protein>
<organism>
    <name type="scientific">Psychromonas ingrahamii (strain DSM 17664 / CCUG 51855 / 37)</name>
    <dbReference type="NCBI Taxonomy" id="357804"/>
    <lineage>
        <taxon>Bacteria</taxon>
        <taxon>Pseudomonadati</taxon>
        <taxon>Pseudomonadota</taxon>
        <taxon>Gammaproteobacteria</taxon>
        <taxon>Alteromonadales</taxon>
        <taxon>Psychromonadaceae</taxon>
        <taxon>Psychromonas</taxon>
    </lineage>
</organism>
<name>RL29_PSYIN</name>
<gene>
    <name evidence="1" type="primary">rpmC</name>
    <name type="ordered locus">Ping_3516</name>
</gene>
<feature type="chain" id="PRO_1000007573" description="Large ribosomal subunit protein uL29">
    <location>
        <begin position="1"/>
        <end position="63"/>
    </location>
</feature>
<accession>A1T0D4</accession>